<evidence type="ECO:0000250" key="1">
    <source>
        <dbReference type="UniProtKB" id="P84092"/>
    </source>
</evidence>
<evidence type="ECO:0000250" key="2">
    <source>
        <dbReference type="UniProtKB" id="Q96CW1"/>
    </source>
</evidence>
<evidence type="ECO:0000255" key="3">
    <source>
        <dbReference type="PROSITE-ProRule" id="PRU00404"/>
    </source>
</evidence>
<evidence type="ECO:0000305" key="4"/>
<gene>
    <name type="primary">AP2M1</name>
    <name type="ORF">RCJMB04_1h23</name>
</gene>
<protein>
    <recommendedName>
        <fullName>AP-2 complex subunit mu</fullName>
    </recommendedName>
    <alternativeName>
        <fullName>AP-2 mu chain</fullName>
    </alternativeName>
    <alternativeName>
        <fullName>Clathrin assembly protein complex 2 mu medium chain</fullName>
    </alternativeName>
    <alternativeName>
        <fullName>Clathrin coat assembly protein AP50</fullName>
    </alternativeName>
    <alternativeName>
        <fullName>Clathrin coat-associated protein AP50</fullName>
    </alternativeName>
    <alternativeName>
        <fullName>HA2 50 kDa subunit</fullName>
    </alternativeName>
    <alternativeName>
        <fullName>Mu2-adaptin</fullName>
    </alternativeName>
    <alternativeName>
        <fullName>Plasma membrane adaptor AP-2 50 kDa protein</fullName>
    </alternativeName>
</protein>
<comment type="function">
    <text evidence="1 2">Component of the adaptor complexes which link clathrin to receptors in coated vesicles. Clathrin-associated protein complexes are believed to interact with the cytoplasmic tails of membrane proteins, leading to their selection and concentration. AP50 is a subunit of the plasma membrane adaptor. The complex binds polyphosphoinositide-containing lipids.</text>
</comment>
<comment type="subunit">
    <text evidence="2">Adaptor protein complex 2 (AP-2) is a heterotetramer composed of two large adaptins (alpha-type subunit and beta-type subunit), a medium adaptin (mu-type subunit) and a small adaptin (sigma-type subunit).</text>
</comment>
<comment type="subcellular location">
    <subcellularLocation>
        <location evidence="2">Cell membrane</location>
    </subcellularLocation>
    <subcellularLocation>
        <location evidence="2">Membrane</location>
        <location evidence="2">Coated pit</location>
        <topology evidence="2">Peripheral membrane protein</topology>
        <orientation evidence="2">Cytoplasmic side</orientation>
    </subcellularLocation>
</comment>
<comment type="similarity">
    <text evidence="4">Belongs to the adaptor complexes medium subunit family.</text>
</comment>
<accession>Q5ZMP6</accession>
<reference key="1">
    <citation type="journal article" date="2005" name="Genome Biol.">
        <title>Full-length cDNAs from chicken bursal lymphocytes to facilitate gene function analysis.</title>
        <authorList>
            <person name="Caldwell R.B."/>
            <person name="Kierzek A.M."/>
            <person name="Arakawa H."/>
            <person name="Bezzubov Y."/>
            <person name="Zaim J."/>
            <person name="Fiedler P."/>
            <person name="Kutter S."/>
            <person name="Blagodatski A."/>
            <person name="Kostovska D."/>
            <person name="Koter M."/>
            <person name="Plachy J."/>
            <person name="Carninci P."/>
            <person name="Hayashizaki Y."/>
            <person name="Buerstedde J.-M."/>
        </authorList>
    </citation>
    <scope>NUCLEOTIDE SEQUENCE [LARGE SCALE MRNA]</scope>
    <source>
        <strain>CB</strain>
        <tissue>Bursa of Fabricius</tissue>
    </source>
</reference>
<organism>
    <name type="scientific">Gallus gallus</name>
    <name type="common">Chicken</name>
    <dbReference type="NCBI Taxonomy" id="9031"/>
    <lineage>
        <taxon>Eukaryota</taxon>
        <taxon>Metazoa</taxon>
        <taxon>Chordata</taxon>
        <taxon>Craniata</taxon>
        <taxon>Vertebrata</taxon>
        <taxon>Euteleostomi</taxon>
        <taxon>Archelosauria</taxon>
        <taxon>Archosauria</taxon>
        <taxon>Dinosauria</taxon>
        <taxon>Saurischia</taxon>
        <taxon>Theropoda</taxon>
        <taxon>Coelurosauria</taxon>
        <taxon>Aves</taxon>
        <taxon>Neognathae</taxon>
        <taxon>Galloanserae</taxon>
        <taxon>Galliformes</taxon>
        <taxon>Phasianidae</taxon>
        <taxon>Phasianinae</taxon>
        <taxon>Gallus</taxon>
    </lineage>
</organism>
<sequence length="433" mass="49389">MIGGLFIYNHKGEVLISRVYRDDIGRNAVDAFRVNVIHARQQVRSPVTNIARTSFFHVKRSNIWLAAVTKQNVNAAMVFEFLYKMCDVMTAYFGKISEENIKNNFVLIYELLDEILDFGYPQNSETGALKTFITQQGIKSQTKEEQSQITSQVTGQIGWRREGIKYRRNELFLDVLESVNLLMSPQGQVLSAHVSGRVVMKSYLSGMPECKFGMNDKIVIEKQGKGTADETGKSGKQSIAIDDCTFHQCVRLSKFDSERSISFIPPDGEFELMRYRTTKDIILPFRVIPLVREVGRTKLEVKVVIKSNFKPSLLAQKIEVRIPTPLNTSGVQVICMKGKAKYKASENAIVWKIKRMAGMKESQISAEIELLPTNDKKKWARPPISMNFEVPFAPSGLKVRYLKVFEPKLNYSDHDVIKWVRYIGRSGIYETRC</sequence>
<feature type="chain" id="PRO_0000318893" description="AP-2 complex subunit mu">
    <location>
        <begin position="1"/>
        <end position="433"/>
    </location>
</feature>
<feature type="domain" description="MHD" evidence="3">
    <location>
        <begin position="168"/>
        <end position="432"/>
    </location>
</feature>
<feature type="binding site" evidence="1">
    <location>
        <position position="339"/>
    </location>
    <ligand>
        <name>a 1,2-diacyl-sn-glycero-3-phospho-(1D-myo-inositol-3,4,5-trisphosphate)</name>
        <dbReference type="ChEBI" id="CHEBI:57836"/>
    </ligand>
</feature>
<feature type="binding site" evidence="1">
    <location>
        <position position="343"/>
    </location>
    <ligand>
        <name>a 1,2-diacyl-sn-glycero-3-phospho-(1D-myo-inositol-3,4,5-trisphosphate)</name>
        <dbReference type="ChEBI" id="CHEBI:57836"/>
    </ligand>
</feature>
<feature type="binding site" evidence="1">
    <location>
        <position position="352"/>
    </location>
    <ligand>
        <name>a 1,2-diacyl-sn-glycero-3-phospho-(1D-myo-inositol-3,4,5-trisphosphate)</name>
        <dbReference type="ChEBI" id="CHEBI:57836"/>
    </ligand>
</feature>
<dbReference type="EMBL" id="AJ719338">
    <property type="protein sequence ID" value="CAG30997.1"/>
    <property type="molecule type" value="mRNA"/>
</dbReference>
<dbReference type="RefSeq" id="NP_001072962.1">
    <property type="nucleotide sequence ID" value="NM_001079494.2"/>
</dbReference>
<dbReference type="RefSeq" id="NP_001383165.1">
    <property type="nucleotide sequence ID" value="NM_001396236.1"/>
</dbReference>
<dbReference type="RefSeq" id="XP_015146933.1">
    <property type="nucleotide sequence ID" value="XM_015291447.1"/>
</dbReference>
<dbReference type="RefSeq" id="XP_046779974.1">
    <property type="nucleotide sequence ID" value="XM_046924018.1"/>
</dbReference>
<dbReference type="SMR" id="Q5ZMP6"/>
<dbReference type="FunCoup" id="Q5ZMP6">
    <property type="interactions" value="2710"/>
</dbReference>
<dbReference type="STRING" id="9031.ENSGALP00000013724"/>
<dbReference type="PaxDb" id="9031-ENSGALP00000013724"/>
<dbReference type="Ensembl" id="ENSGALT00010046066.1">
    <property type="protein sequence ID" value="ENSGALP00010027460.1"/>
    <property type="gene ID" value="ENSGALG00010019023.1"/>
</dbReference>
<dbReference type="GeneID" id="770246"/>
<dbReference type="KEGG" id="gga:770246"/>
<dbReference type="CTD" id="1173"/>
<dbReference type="VEuPathDB" id="HostDB:geneid_770246"/>
<dbReference type="eggNOG" id="KOG0938">
    <property type="taxonomic scope" value="Eukaryota"/>
</dbReference>
<dbReference type="GeneTree" id="ENSGT00940000159223"/>
<dbReference type="HOGENOM" id="CLU_026996_5_2_1"/>
<dbReference type="InParanoid" id="Q5ZMP6"/>
<dbReference type="OrthoDB" id="10259133at2759"/>
<dbReference type="PhylomeDB" id="Q5ZMP6"/>
<dbReference type="TreeFam" id="TF300722"/>
<dbReference type="Reactome" id="R-GGA-177504">
    <property type="pathway name" value="Retrograde neurotrophin signalling"/>
</dbReference>
<dbReference type="Reactome" id="R-GGA-190873">
    <property type="pathway name" value="Gap junction degradation"/>
</dbReference>
<dbReference type="Reactome" id="R-GGA-196025">
    <property type="pathway name" value="Formation of annular gap junctions"/>
</dbReference>
<dbReference type="Reactome" id="R-GGA-2132295">
    <property type="pathway name" value="MHC class II antigen presentation"/>
</dbReference>
<dbReference type="Reactome" id="R-GGA-3928665">
    <property type="pathway name" value="EPH-ephrin mediated repulsion of cells"/>
</dbReference>
<dbReference type="Reactome" id="R-GGA-416993">
    <property type="pathway name" value="Trafficking of GluR2-containing AMPA receptors"/>
</dbReference>
<dbReference type="Reactome" id="R-GGA-437239">
    <property type="pathway name" value="Recycling pathway of L1"/>
</dbReference>
<dbReference type="Reactome" id="R-GGA-5140745">
    <property type="pathway name" value="WNT5A-dependent internalization of FZD2, FZD5 and ROR2"/>
</dbReference>
<dbReference type="Reactome" id="R-GGA-8856825">
    <property type="pathway name" value="Cargo recognition for clathrin-mediated endocytosis"/>
</dbReference>
<dbReference type="Reactome" id="R-GGA-8856828">
    <property type="pathway name" value="Clathrin-mediated endocytosis"/>
</dbReference>
<dbReference type="Reactome" id="R-GGA-8866427">
    <property type="pathway name" value="VLDLR internalisation and degradation"/>
</dbReference>
<dbReference type="Reactome" id="R-GGA-8964038">
    <property type="pathway name" value="LDL clearance"/>
</dbReference>
<dbReference type="PRO" id="PR:Q5ZMP6"/>
<dbReference type="Proteomes" id="UP000000539">
    <property type="component" value="Chromosome 9"/>
</dbReference>
<dbReference type="Bgee" id="ENSGALG00000008432">
    <property type="expression patterns" value="Expressed in brain and 13 other cell types or tissues"/>
</dbReference>
<dbReference type="GO" id="GO:0030122">
    <property type="term" value="C:AP-2 adaptor complex"/>
    <property type="evidence" value="ECO:0000318"/>
    <property type="project" value="GO_Central"/>
</dbReference>
<dbReference type="GO" id="GO:0031410">
    <property type="term" value="C:cytoplasmic vesicle"/>
    <property type="evidence" value="ECO:0000318"/>
    <property type="project" value="GO_Central"/>
</dbReference>
<dbReference type="GO" id="GO:0035615">
    <property type="term" value="F:clathrin adaptor activity"/>
    <property type="evidence" value="ECO:0000318"/>
    <property type="project" value="GO_Central"/>
</dbReference>
<dbReference type="GO" id="GO:0008289">
    <property type="term" value="F:lipid binding"/>
    <property type="evidence" value="ECO:0007669"/>
    <property type="project" value="UniProtKB-KW"/>
</dbReference>
<dbReference type="GO" id="GO:0072583">
    <property type="term" value="P:clathrin-dependent endocytosis"/>
    <property type="evidence" value="ECO:0000318"/>
    <property type="project" value="GO_Central"/>
</dbReference>
<dbReference type="GO" id="GO:0006886">
    <property type="term" value="P:intracellular protein transport"/>
    <property type="evidence" value="ECO:0007669"/>
    <property type="project" value="InterPro"/>
</dbReference>
<dbReference type="CDD" id="cd09251">
    <property type="entry name" value="AP-2_Mu2_Cterm"/>
    <property type="match status" value="1"/>
</dbReference>
<dbReference type="CDD" id="cd14836">
    <property type="entry name" value="AP2_Mu_N"/>
    <property type="match status" value="1"/>
</dbReference>
<dbReference type="FunFam" id="2.60.40.1170:FF:000008">
    <property type="entry name" value="AP-2 complex subunit mu isoform 2"/>
    <property type="match status" value="1"/>
</dbReference>
<dbReference type="FunFam" id="3.30.450.60:FF:000002">
    <property type="entry name" value="AP-2 complex subunit mu, putative"/>
    <property type="match status" value="1"/>
</dbReference>
<dbReference type="Gene3D" id="3.30.450.60">
    <property type="match status" value="1"/>
</dbReference>
<dbReference type="Gene3D" id="2.60.40.1170">
    <property type="entry name" value="Mu homology domain, subdomain B"/>
    <property type="match status" value="2"/>
</dbReference>
<dbReference type="InterPro" id="IPR050431">
    <property type="entry name" value="Adaptor_comp_med_subunit"/>
</dbReference>
<dbReference type="InterPro" id="IPR036168">
    <property type="entry name" value="AP2_Mu_C_sf"/>
</dbReference>
<dbReference type="InterPro" id="IPR043532">
    <property type="entry name" value="AP2_Mu_N"/>
</dbReference>
<dbReference type="InterPro" id="IPR022775">
    <property type="entry name" value="AP_mu_sigma_su"/>
</dbReference>
<dbReference type="InterPro" id="IPR001392">
    <property type="entry name" value="Clathrin_mu"/>
</dbReference>
<dbReference type="InterPro" id="IPR018240">
    <property type="entry name" value="Clathrin_mu_CS"/>
</dbReference>
<dbReference type="InterPro" id="IPR011012">
    <property type="entry name" value="Longin-like_dom_sf"/>
</dbReference>
<dbReference type="InterPro" id="IPR028565">
    <property type="entry name" value="MHD"/>
</dbReference>
<dbReference type="InterPro" id="IPR043512">
    <property type="entry name" value="Mu2_C"/>
</dbReference>
<dbReference type="PANTHER" id="PTHR10529">
    <property type="entry name" value="AP COMPLEX SUBUNIT MU"/>
    <property type="match status" value="1"/>
</dbReference>
<dbReference type="Pfam" id="PF00928">
    <property type="entry name" value="Adap_comp_sub"/>
    <property type="match status" value="1"/>
</dbReference>
<dbReference type="Pfam" id="PF01217">
    <property type="entry name" value="Clat_adaptor_s"/>
    <property type="match status" value="1"/>
</dbReference>
<dbReference type="PIRSF" id="PIRSF005992">
    <property type="entry name" value="Clathrin_mu"/>
    <property type="match status" value="1"/>
</dbReference>
<dbReference type="PRINTS" id="PR00314">
    <property type="entry name" value="CLATHRINADPT"/>
</dbReference>
<dbReference type="SUPFAM" id="SSF49447">
    <property type="entry name" value="Second domain of Mu2 adaptin subunit (ap50) of ap2 adaptor"/>
    <property type="match status" value="1"/>
</dbReference>
<dbReference type="SUPFAM" id="SSF64356">
    <property type="entry name" value="SNARE-like"/>
    <property type="match status" value="1"/>
</dbReference>
<dbReference type="PROSITE" id="PS00990">
    <property type="entry name" value="CLAT_ADAPTOR_M_1"/>
    <property type="match status" value="1"/>
</dbReference>
<dbReference type="PROSITE" id="PS00991">
    <property type="entry name" value="CLAT_ADAPTOR_M_2"/>
    <property type="match status" value="1"/>
</dbReference>
<dbReference type="PROSITE" id="PS51072">
    <property type="entry name" value="MHD"/>
    <property type="match status" value="1"/>
</dbReference>
<name>AP2M1_CHICK</name>
<proteinExistence type="evidence at transcript level"/>
<keyword id="KW-1003">Cell membrane</keyword>
<keyword id="KW-0168">Coated pit</keyword>
<keyword id="KW-0254">Endocytosis</keyword>
<keyword id="KW-0446">Lipid-binding</keyword>
<keyword id="KW-0472">Membrane</keyword>
<keyword id="KW-0653">Protein transport</keyword>
<keyword id="KW-1185">Reference proteome</keyword>
<keyword id="KW-0813">Transport</keyword>